<organismHost>
    <name type="scientific">Aves</name>
    <dbReference type="NCBI Taxonomy" id="8782"/>
</organismHost>
<organismHost>
    <name type="scientific">Cetacea</name>
    <name type="common">whales</name>
    <dbReference type="NCBI Taxonomy" id="9721"/>
</organismHost>
<organismHost>
    <name type="scientific">Homo sapiens</name>
    <name type="common">Human</name>
    <dbReference type="NCBI Taxonomy" id="9606"/>
</organismHost>
<organismHost>
    <name type="scientific">Phocidae</name>
    <name type="common">true seals</name>
    <dbReference type="NCBI Taxonomy" id="9709"/>
</organismHost>
<organismHost>
    <name type="scientific">Sus scrofa</name>
    <name type="common">Pig</name>
    <dbReference type="NCBI Taxonomy" id="9823"/>
</organismHost>
<sequence>MERIKELRNLMSQSRTREILTKTTVDHMAIIKKFTSGRQEKNPALRMKWMMAMKYPITADKRITEMIPERNEQGQTLWSKMNDAGSDRVMVSPLAVTWWNRNGPMTNTVHYPKIYKTYFERVERLKHGTFGPVHFRNQVKIRRRVDINPGHADLSAKEAQDVIMEVVFPNEVGARILTSESQLTITKEKKEELQDCKISPLMVAYMLERELVRKTRFLPVAGGTSSVYIEVLHLTQGTCWEQMYTPGGEVRNDDVDQSLIIAARNIVRRAAVSADPLASLLEMCHSTQIGGIRMVDILRQNPTEEQAVDICKAAMGLRISSSFSFGGFTFKRTSGSSVKREEEVLTGNLQTLKIRVHEGYEEFTMVGRRATAILRKATRRLIQLIVSGRDEQSIAEAIIVAMVFSQEDCMIKAVRGDLNFVNRANQRLNPMHQLLRHFQKDAKVLFQNWGVEPIDNVMGMIGILPDMTPSIEMSMRGVRISKMGVDEYSSTERVVVSIDRFLRIRDQRGNVLLSPEEVSETQGTEKLTITYSSSMMWEINGPESVLVNTYQWIIRNWETVKIQWSQNPTMLYNKMEFEPFQSLVPKAIRGQYSGFVRTLFQQMRDVLGTFDTAQIIKLLPFAAAPPKQSRMQFSSFTVNVRGSGMRILVRGNSPVFNYNKATKRLTVLGKDAGTLTEDPDEGTAGVESAVLRGFLILGKEDKRYGPALSINELSNLAKGEKANVLIGQGDVVLVMKRKRDSSILTDSQTATKRIRMAIN</sequence>
<keyword id="KW-1157">Cap snatching</keyword>
<keyword id="KW-1262">Eukaryotic host gene expression shutoff by virus</keyword>
<keyword id="KW-1191">Eukaryotic host transcription shutoff by virus</keyword>
<keyword id="KW-1190">Host gene expression shutoff by virus</keyword>
<keyword id="KW-1045">Host mitochondrion</keyword>
<keyword id="KW-1048">Host nucleus</keyword>
<keyword id="KW-0945">Host-virus interaction</keyword>
<keyword id="KW-1090">Inhibition of host innate immune response by virus</keyword>
<keyword id="KW-1097">Inhibition of host MAVS by virus</keyword>
<keyword id="KW-1113">Inhibition of host RLR pathway by virus</keyword>
<keyword id="KW-1104">Inhibition of host RNA polymerase II by virus</keyword>
<keyword id="KW-0506">mRNA capping</keyword>
<keyword id="KW-0507">mRNA processing</keyword>
<keyword id="KW-0899">Viral immunoevasion</keyword>
<keyword id="KW-1195">Viral transcription</keyword>
<keyword id="KW-0946">Virion</keyword>
<organism>
    <name type="scientific">Influenza A virus (strain A/X-31 H3N2)</name>
    <dbReference type="NCBI Taxonomy" id="132504"/>
    <lineage>
        <taxon>Viruses</taxon>
        <taxon>Riboviria</taxon>
        <taxon>Orthornavirae</taxon>
        <taxon>Negarnaviricota</taxon>
        <taxon>Polyploviricotina</taxon>
        <taxon>Insthoviricetes</taxon>
        <taxon>Articulavirales</taxon>
        <taxon>Orthomyxoviridae</taxon>
        <taxon>Alphainfluenzavirus</taxon>
        <taxon>Alphainfluenzavirus influenzae</taxon>
        <taxon>Influenza A virus</taxon>
    </lineage>
</organism>
<gene>
    <name evidence="1" type="primary">PB2</name>
</gene>
<name>PB2_I000X</name>
<protein>
    <recommendedName>
        <fullName evidence="1">Polymerase basic protein 2</fullName>
    </recommendedName>
    <alternativeName>
        <fullName evidence="1">RNA-directed RNA polymerase subunit P3</fullName>
    </alternativeName>
</protein>
<comment type="function">
    <text evidence="1">Plays an essential role in transcription initiation and cap-stealing mechanism, in which cellular capped pre-mRNAs are used to generate primers for viral transcription. Recognizes and binds the 7-methylguanosine-containing cap of the target pre-RNA which is subsequently cleaved after 10-13 nucleotides by the viral protein PA. Plays a role in the initiation of the viral genome replication and modulates the activity of the ribonucleoprotein (RNP) complex. In addition, participates in the inhibition of type I interferon induction through interaction with and inhibition of the host mitochondrial antiviral signaling protein MAVS.</text>
</comment>
<comment type="subunit">
    <text evidence="1">Influenza RNA polymerase is composed of three subunits: PB1, PB2 and PA. Interacts (via N-terminus) with PB1 (via C-terminus). Interacts with nucleoprotein NP (via N-terminus). Interacts (via N-terminus) with host MAVS (via N-terminus); this interaction inhibits host innate immune response.</text>
</comment>
<comment type="subcellular location">
    <subcellularLocation>
        <location evidence="1">Virion</location>
    </subcellularLocation>
    <subcellularLocation>
        <location evidence="1">Host nucleus</location>
    </subcellularLocation>
    <subcellularLocation>
        <location evidence="1">Host mitochondrion</location>
    </subcellularLocation>
</comment>
<comment type="similarity">
    <text evidence="1">Belongs to the influenza viruses PB2 family.</text>
</comment>
<evidence type="ECO:0000255" key="1">
    <source>
        <dbReference type="HAMAP-Rule" id="MF_04062"/>
    </source>
</evidence>
<dbReference type="EMBL" id="AB036782">
    <property type="protein sequence ID" value="BAA99403.1"/>
    <property type="molecule type" value="Genomic_RNA"/>
</dbReference>
<dbReference type="SMR" id="Q9IQ45"/>
<dbReference type="GO" id="GO:0033650">
    <property type="term" value="C:host cell mitochondrion"/>
    <property type="evidence" value="ECO:0007669"/>
    <property type="project" value="UniProtKB-SubCell"/>
</dbReference>
<dbReference type="GO" id="GO:0042025">
    <property type="term" value="C:host cell nucleus"/>
    <property type="evidence" value="ECO:0007669"/>
    <property type="project" value="UniProtKB-SubCell"/>
</dbReference>
<dbReference type="GO" id="GO:0044423">
    <property type="term" value="C:virion component"/>
    <property type="evidence" value="ECO:0007669"/>
    <property type="project" value="UniProtKB-UniRule"/>
</dbReference>
<dbReference type="GO" id="GO:0003723">
    <property type="term" value="F:RNA binding"/>
    <property type="evidence" value="ECO:0007669"/>
    <property type="project" value="UniProtKB-UniRule"/>
</dbReference>
<dbReference type="GO" id="GO:0003968">
    <property type="term" value="F:RNA-directed RNA polymerase activity"/>
    <property type="evidence" value="ECO:0007669"/>
    <property type="project" value="UniProtKB-UniRule"/>
</dbReference>
<dbReference type="GO" id="GO:0006370">
    <property type="term" value="P:7-methylguanosine mRNA capping"/>
    <property type="evidence" value="ECO:0007669"/>
    <property type="project" value="UniProtKB-UniRule"/>
</dbReference>
<dbReference type="GO" id="GO:0075526">
    <property type="term" value="P:cap snatching"/>
    <property type="evidence" value="ECO:0007669"/>
    <property type="project" value="UniProtKB-UniRule"/>
</dbReference>
<dbReference type="GO" id="GO:0006351">
    <property type="term" value="P:DNA-templated transcription"/>
    <property type="evidence" value="ECO:0007669"/>
    <property type="project" value="UniProtKB-UniRule"/>
</dbReference>
<dbReference type="GO" id="GO:0039545">
    <property type="term" value="P:symbiont-mediated suppression of host cytoplasmic pattern recognition receptor signaling pathway via inhibition of MAVS activity"/>
    <property type="evidence" value="ECO:0007669"/>
    <property type="project" value="UniProtKB-UniRule"/>
</dbReference>
<dbReference type="GO" id="GO:0039657">
    <property type="term" value="P:symbiont-mediated suppression of host gene expression"/>
    <property type="evidence" value="ECO:0007669"/>
    <property type="project" value="UniProtKB-KW"/>
</dbReference>
<dbReference type="GO" id="GO:0039523">
    <property type="term" value="P:symbiont-mediated suppression of host mRNA transcription via inhibition of RNA polymerase II activity"/>
    <property type="evidence" value="ECO:0007669"/>
    <property type="project" value="UniProtKB-UniRule"/>
</dbReference>
<dbReference type="GO" id="GO:0039694">
    <property type="term" value="P:viral RNA genome replication"/>
    <property type="evidence" value="ECO:0007669"/>
    <property type="project" value="InterPro"/>
</dbReference>
<dbReference type="FunFam" id="3.30.30.90:FF:000001">
    <property type="entry name" value="Polymerase basic protein 2"/>
    <property type="match status" value="1"/>
</dbReference>
<dbReference type="Gene3D" id="3.30.30.90">
    <property type="entry name" value="Polymerase Basic Protein 2, C-terminal domain"/>
    <property type="match status" value="1"/>
</dbReference>
<dbReference type="HAMAP" id="MF_04062">
    <property type="entry name" value="INV_PB2"/>
    <property type="match status" value="1"/>
</dbReference>
<dbReference type="InterPro" id="IPR049110">
    <property type="entry name" value="Flu_PB2_2nd"/>
</dbReference>
<dbReference type="InterPro" id="IPR049114">
    <property type="entry name" value="Flu_PB2_6th"/>
</dbReference>
<dbReference type="InterPro" id="IPR049115">
    <property type="entry name" value="Flu_PB2_C"/>
</dbReference>
<dbReference type="InterPro" id="IPR048298">
    <property type="entry name" value="Flu_PB2_CAP-bd"/>
</dbReference>
<dbReference type="InterPro" id="IPR049111">
    <property type="entry name" value="Flu_PB2_middle"/>
</dbReference>
<dbReference type="InterPro" id="IPR049106">
    <property type="entry name" value="Flu_PB2_N"/>
</dbReference>
<dbReference type="InterPro" id="IPR001591">
    <property type="entry name" value="INV_PB2"/>
</dbReference>
<dbReference type="InterPro" id="IPR049113">
    <property type="entry name" value="PB2_helical"/>
</dbReference>
<dbReference type="InterPro" id="IPR037258">
    <property type="entry name" value="PDB2_C"/>
</dbReference>
<dbReference type="Pfam" id="PF20947">
    <property type="entry name" value="Flu_PB2_1st"/>
    <property type="match status" value="1"/>
</dbReference>
<dbReference type="Pfam" id="PF20948">
    <property type="entry name" value="Flu_PB2_2nd"/>
    <property type="match status" value="1"/>
</dbReference>
<dbReference type="Pfam" id="PF20949">
    <property type="entry name" value="Flu_PB2_3rd"/>
    <property type="match status" value="1"/>
</dbReference>
<dbReference type="Pfam" id="PF20950">
    <property type="entry name" value="Flu_PB2_4th"/>
    <property type="match status" value="1"/>
</dbReference>
<dbReference type="Pfam" id="PF00604">
    <property type="entry name" value="Flu_PB2_5th"/>
    <property type="match status" value="1"/>
</dbReference>
<dbReference type="Pfam" id="PF20951">
    <property type="entry name" value="Flu_PB2_6th"/>
    <property type="match status" value="1"/>
</dbReference>
<dbReference type="Pfam" id="PF20952">
    <property type="entry name" value="Flu_PB2_7th"/>
    <property type="match status" value="1"/>
</dbReference>
<dbReference type="SUPFAM" id="SSF160453">
    <property type="entry name" value="PB2 C-terminal domain-like"/>
    <property type="match status" value="1"/>
</dbReference>
<accession>Q9IQ45</accession>
<proteinExistence type="inferred from homology"/>
<feature type="chain" id="PRO_0000279652" description="Polymerase basic protein 2">
    <location>
        <begin position="1"/>
        <end position="759"/>
    </location>
</feature>
<feature type="short sequence motif" description="Nuclear localization signal" evidence="1">
    <location>
        <begin position="736"/>
        <end position="739"/>
    </location>
</feature>
<feature type="site" description="Mammalian adaptation" evidence="1">
    <location>
        <position position="627"/>
    </location>
</feature>
<reference key="1">
    <citation type="submission" date="2000-01" db="EMBL/GenBank/DDBJ databases">
        <authorList>
            <person name="Seong B."/>
            <person name="Lee K."/>
        </authorList>
    </citation>
    <scope>NUCLEOTIDE SEQUENCE [GENOMIC RNA]</scope>
</reference>